<protein>
    <recommendedName>
        <fullName evidence="1">Sugar fermentation stimulation protein homolog</fullName>
    </recommendedName>
</protein>
<dbReference type="EMBL" id="BA000031">
    <property type="protein sequence ID" value="BAC60762.1"/>
    <property type="molecule type" value="Genomic_DNA"/>
</dbReference>
<dbReference type="RefSeq" id="NP_798878.1">
    <property type="nucleotide sequence ID" value="NC_004603.1"/>
</dbReference>
<dbReference type="RefSeq" id="WP_005465034.1">
    <property type="nucleotide sequence ID" value="NC_004603.1"/>
</dbReference>
<dbReference type="SMR" id="Q87LV9"/>
<dbReference type="GeneID" id="1190014"/>
<dbReference type="KEGG" id="vpa:VP2499"/>
<dbReference type="PATRIC" id="fig|223926.6.peg.2400"/>
<dbReference type="eggNOG" id="COG1489">
    <property type="taxonomic scope" value="Bacteria"/>
</dbReference>
<dbReference type="HOGENOM" id="CLU_052299_2_0_6"/>
<dbReference type="Proteomes" id="UP000002493">
    <property type="component" value="Chromosome 1"/>
</dbReference>
<dbReference type="GO" id="GO:0003677">
    <property type="term" value="F:DNA binding"/>
    <property type="evidence" value="ECO:0007669"/>
    <property type="project" value="InterPro"/>
</dbReference>
<dbReference type="CDD" id="cd22359">
    <property type="entry name" value="SfsA-like_bacterial"/>
    <property type="match status" value="1"/>
</dbReference>
<dbReference type="FunFam" id="2.40.50.580:FF:000001">
    <property type="entry name" value="Sugar fermentation stimulation protein A"/>
    <property type="match status" value="1"/>
</dbReference>
<dbReference type="FunFam" id="3.40.1350.60:FF:000001">
    <property type="entry name" value="Sugar fermentation stimulation protein A"/>
    <property type="match status" value="1"/>
</dbReference>
<dbReference type="Gene3D" id="2.40.50.580">
    <property type="match status" value="1"/>
</dbReference>
<dbReference type="Gene3D" id="3.40.1350.60">
    <property type="match status" value="1"/>
</dbReference>
<dbReference type="HAMAP" id="MF_00095">
    <property type="entry name" value="SfsA"/>
    <property type="match status" value="1"/>
</dbReference>
<dbReference type="InterPro" id="IPR005224">
    <property type="entry name" value="SfsA"/>
</dbReference>
<dbReference type="InterPro" id="IPR040452">
    <property type="entry name" value="SfsA_C"/>
</dbReference>
<dbReference type="InterPro" id="IPR041465">
    <property type="entry name" value="SfsA_N"/>
</dbReference>
<dbReference type="NCBIfam" id="TIGR00230">
    <property type="entry name" value="sfsA"/>
    <property type="match status" value="1"/>
</dbReference>
<dbReference type="PANTHER" id="PTHR30545">
    <property type="entry name" value="SUGAR FERMENTATION STIMULATION PROTEIN A"/>
    <property type="match status" value="1"/>
</dbReference>
<dbReference type="PANTHER" id="PTHR30545:SF2">
    <property type="entry name" value="SUGAR FERMENTATION STIMULATION PROTEIN A"/>
    <property type="match status" value="1"/>
</dbReference>
<dbReference type="Pfam" id="PF03749">
    <property type="entry name" value="SfsA"/>
    <property type="match status" value="1"/>
</dbReference>
<dbReference type="Pfam" id="PF17746">
    <property type="entry name" value="SfsA_N"/>
    <property type="match status" value="1"/>
</dbReference>
<evidence type="ECO:0000255" key="1">
    <source>
        <dbReference type="HAMAP-Rule" id="MF_00095"/>
    </source>
</evidence>
<organism>
    <name type="scientific">Vibrio parahaemolyticus serotype O3:K6 (strain RIMD 2210633)</name>
    <dbReference type="NCBI Taxonomy" id="223926"/>
    <lineage>
        <taxon>Bacteria</taxon>
        <taxon>Pseudomonadati</taxon>
        <taxon>Pseudomonadota</taxon>
        <taxon>Gammaproteobacteria</taxon>
        <taxon>Vibrionales</taxon>
        <taxon>Vibrionaceae</taxon>
        <taxon>Vibrio</taxon>
    </lineage>
</organism>
<comment type="similarity">
    <text evidence="1">Belongs to the SfsA family.</text>
</comment>
<reference key="1">
    <citation type="journal article" date="2003" name="Lancet">
        <title>Genome sequence of Vibrio parahaemolyticus: a pathogenic mechanism distinct from that of V. cholerae.</title>
        <authorList>
            <person name="Makino K."/>
            <person name="Oshima K."/>
            <person name="Kurokawa K."/>
            <person name="Yokoyama K."/>
            <person name="Uda T."/>
            <person name="Tagomori K."/>
            <person name="Iijima Y."/>
            <person name="Najima M."/>
            <person name="Nakano M."/>
            <person name="Yamashita A."/>
            <person name="Kubota Y."/>
            <person name="Kimura S."/>
            <person name="Yasunaga T."/>
            <person name="Honda T."/>
            <person name="Shinagawa H."/>
            <person name="Hattori M."/>
            <person name="Iida T."/>
        </authorList>
    </citation>
    <scope>NUCLEOTIDE SEQUENCE [LARGE SCALE GENOMIC DNA]</scope>
    <source>
        <strain>RIMD 2210633</strain>
    </source>
</reference>
<sequence>MQFKPALESATLLKRYKRFLADIEFDNGEVRTIHCANTGAMTGCATPGNKVWFSTSDNPKRKYPNSWELSETEQGHRICINTARANQLAVEAIENNVISELCGYDTLQTEVKYGNENSRIDILLSASDKPKCYIEVKSVTLLDETGSAGQGYFPDAVTTRGQKHLRELTEMAQNGSRAILLFTVLHSGIEKVSAAHHIDAKYSLLLKQAQDAGVEVLCYKAELSNTEMKLISAIDFIN</sequence>
<feature type="chain" id="PRO_0000152316" description="Sugar fermentation stimulation protein homolog">
    <location>
        <begin position="1"/>
        <end position="238"/>
    </location>
</feature>
<gene>
    <name evidence="1" type="primary">sfsA</name>
    <name type="ordered locus">VP2499</name>
</gene>
<name>SFSA_VIBPA</name>
<proteinExistence type="inferred from homology"/>
<accession>Q87LV9</accession>